<protein>
    <recommendedName>
        <fullName evidence="1">Glycine--tRNA ligase beta subunit</fullName>
        <ecNumber evidence="1">6.1.1.14</ecNumber>
    </recommendedName>
    <alternativeName>
        <fullName evidence="1">Glycyl-tRNA synthetase beta subunit</fullName>
        <shortName evidence="1">GlyRS</shortName>
    </alternativeName>
</protein>
<feature type="chain" id="PRO_1000101270" description="Glycine--tRNA ligase beta subunit">
    <location>
        <begin position="1"/>
        <end position="704"/>
    </location>
</feature>
<comment type="catalytic activity">
    <reaction evidence="1">
        <text>tRNA(Gly) + glycine + ATP = glycyl-tRNA(Gly) + AMP + diphosphate</text>
        <dbReference type="Rhea" id="RHEA:16013"/>
        <dbReference type="Rhea" id="RHEA-COMP:9664"/>
        <dbReference type="Rhea" id="RHEA-COMP:9683"/>
        <dbReference type="ChEBI" id="CHEBI:30616"/>
        <dbReference type="ChEBI" id="CHEBI:33019"/>
        <dbReference type="ChEBI" id="CHEBI:57305"/>
        <dbReference type="ChEBI" id="CHEBI:78442"/>
        <dbReference type="ChEBI" id="CHEBI:78522"/>
        <dbReference type="ChEBI" id="CHEBI:456215"/>
        <dbReference type="EC" id="6.1.1.14"/>
    </reaction>
</comment>
<comment type="subunit">
    <text evidence="1">Tetramer of two alpha and two beta subunits.</text>
</comment>
<comment type="subcellular location">
    <subcellularLocation>
        <location evidence="1">Cytoplasm</location>
    </subcellularLocation>
</comment>
<comment type="similarity">
    <text evidence="1">Belongs to the class-II aminoacyl-tRNA synthetase family.</text>
</comment>
<keyword id="KW-0030">Aminoacyl-tRNA synthetase</keyword>
<keyword id="KW-0067">ATP-binding</keyword>
<keyword id="KW-0963">Cytoplasm</keyword>
<keyword id="KW-0436">Ligase</keyword>
<keyword id="KW-0547">Nucleotide-binding</keyword>
<keyword id="KW-0648">Protein biosynthesis</keyword>
<keyword id="KW-1185">Reference proteome</keyword>
<proteinExistence type="inferred from homology"/>
<name>SYGB_DELAS</name>
<organism>
    <name type="scientific">Delftia acidovorans (strain DSM 14801 / SPH-1)</name>
    <dbReference type="NCBI Taxonomy" id="398578"/>
    <lineage>
        <taxon>Bacteria</taxon>
        <taxon>Pseudomonadati</taxon>
        <taxon>Pseudomonadota</taxon>
        <taxon>Betaproteobacteria</taxon>
        <taxon>Burkholderiales</taxon>
        <taxon>Comamonadaceae</taxon>
        <taxon>Delftia</taxon>
    </lineage>
</organism>
<accession>A9BXZ8</accession>
<dbReference type="EC" id="6.1.1.14" evidence="1"/>
<dbReference type="EMBL" id="CP000884">
    <property type="protein sequence ID" value="ABX33933.1"/>
    <property type="molecule type" value="Genomic_DNA"/>
</dbReference>
<dbReference type="RefSeq" id="WP_012203219.1">
    <property type="nucleotide sequence ID" value="NC_010002.1"/>
</dbReference>
<dbReference type="SMR" id="A9BXZ8"/>
<dbReference type="STRING" id="398578.Daci_1289"/>
<dbReference type="GeneID" id="24117813"/>
<dbReference type="KEGG" id="dac:Daci_1289"/>
<dbReference type="eggNOG" id="COG0751">
    <property type="taxonomic scope" value="Bacteria"/>
</dbReference>
<dbReference type="HOGENOM" id="CLU_007220_2_2_4"/>
<dbReference type="Proteomes" id="UP000000784">
    <property type="component" value="Chromosome"/>
</dbReference>
<dbReference type="GO" id="GO:0005829">
    <property type="term" value="C:cytosol"/>
    <property type="evidence" value="ECO:0007669"/>
    <property type="project" value="TreeGrafter"/>
</dbReference>
<dbReference type="GO" id="GO:0004814">
    <property type="term" value="F:arginine-tRNA ligase activity"/>
    <property type="evidence" value="ECO:0007669"/>
    <property type="project" value="InterPro"/>
</dbReference>
<dbReference type="GO" id="GO:0005524">
    <property type="term" value="F:ATP binding"/>
    <property type="evidence" value="ECO:0007669"/>
    <property type="project" value="UniProtKB-UniRule"/>
</dbReference>
<dbReference type="GO" id="GO:0004820">
    <property type="term" value="F:glycine-tRNA ligase activity"/>
    <property type="evidence" value="ECO:0007669"/>
    <property type="project" value="UniProtKB-UniRule"/>
</dbReference>
<dbReference type="GO" id="GO:0006420">
    <property type="term" value="P:arginyl-tRNA aminoacylation"/>
    <property type="evidence" value="ECO:0007669"/>
    <property type="project" value="InterPro"/>
</dbReference>
<dbReference type="GO" id="GO:0006426">
    <property type="term" value="P:glycyl-tRNA aminoacylation"/>
    <property type="evidence" value="ECO:0007669"/>
    <property type="project" value="UniProtKB-UniRule"/>
</dbReference>
<dbReference type="HAMAP" id="MF_00255">
    <property type="entry name" value="Gly_tRNA_synth_beta"/>
    <property type="match status" value="1"/>
</dbReference>
<dbReference type="InterPro" id="IPR008909">
    <property type="entry name" value="DALR_anticod-bd"/>
</dbReference>
<dbReference type="InterPro" id="IPR015944">
    <property type="entry name" value="Gly-tRNA-synth_bsu"/>
</dbReference>
<dbReference type="InterPro" id="IPR006194">
    <property type="entry name" value="Gly-tRNA-synth_heterodimer"/>
</dbReference>
<dbReference type="NCBIfam" id="TIGR00211">
    <property type="entry name" value="glyS"/>
    <property type="match status" value="1"/>
</dbReference>
<dbReference type="PANTHER" id="PTHR30075:SF2">
    <property type="entry name" value="GLYCINE--TRNA LIGASE, CHLOROPLASTIC_MITOCHONDRIAL 2"/>
    <property type="match status" value="1"/>
</dbReference>
<dbReference type="PANTHER" id="PTHR30075">
    <property type="entry name" value="GLYCYL-TRNA SYNTHETASE"/>
    <property type="match status" value="1"/>
</dbReference>
<dbReference type="Pfam" id="PF05746">
    <property type="entry name" value="DALR_1"/>
    <property type="match status" value="1"/>
</dbReference>
<dbReference type="Pfam" id="PF02092">
    <property type="entry name" value="tRNA_synt_2f"/>
    <property type="match status" value="1"/>
</dbReference>
<dbReference type="PRINTS" id="PR01045">
    <property type="entry name" value="TRNASYNTHGB"/>
</dbReference>
<dbReference type="SUPFAM" id="SSF109604">
    <property type="entry name" value="HD-domain/PDEase-like"/>
    <property type="match status" value="1"/>
</dbReference>
<dbReference type="PROSITE" id="PS50861">
    <property type="entry name" value="AA_TRNA_LIGASE_II_GLYAB"/>
    <property type="match status" value="1"/>
</dbReference>
<evidence type="ECO:0000255" key="1">
    <source>
        <dbReference type="HAMAP-Rule" id="MF_00255"/>
    </source>
</evidence>
<gene>
    <name evidence="1" type="primary">glyS</name>
    <name type="ordered locus">Daci_1289</name>
</gene>
<sequence length="704" mass="75565">MNASNLLVELFVEELPPKALQKLGDAFAGVLFEQLKAQGLLASSEARLTAYASPRRLAAHITEVLPQAEDKAVSQKLMPVSVGLDADGKPTPALIKKLAALGAGEEAVAGLTRQGEGKAEALFHSSTVRGVMLADGVQKALDEAIAKLPIPKVMRYQLADGWSSVHFVRPAHGLVVLHGTEVLIGVKALGLTAGTATHGHRFEAAVDPVVIRSADDYAAQLREEGAVIASFAERRAEIARQLQAAAERLGGGVRPIEDEALLDEVTALVERPNVLVCEFEKEFLDVPQECLILTMKANQKYFPLLDAAGKLTHQFLVVSNISPQDASAVIGGNERVVRPRLADAKFFFDQDRKKTLASRVEGLGKVVYHNKLGTQGERVERVRSIAKSIARQLGDTGLAQQADLAAQLAKTDLVTDMVGEFPELQGTMGRYYALNDGLDVAVADAIEDHYKPRFAGDELPRGNAGVVVALADKLETLVGMFGIGNLPTGDRDPFALRRHALGVIRMLVEKDLALDLETLLVSVLPAFGDKIEDATPQLADFIYDRLAGNLREQGFSAQEVDSVLALRPQRLSDVQKRLEAVRAFGELPEAPALAAANKRVGNILKKADQAVQAQVDAAVLAEVAEKDLYAALQSVAPKAQQQFAAGDYTASLQTLAALRAPVDAFFEHVMVNAEDPALKANRLGLLATLHEAMNRVADLSRLAA</sequence>
<reference key="1">
    <citation type="submission" date="2007-11" db="EMBL/GenBank/DDBJ databases">
        <title>Complete sequence of Delftia acidovorans DSM 14801 / SPH-1.</title>
        <authorList>
            <person name="Copeland A."/>
            <person name="Lucas S."/>
            <person name="Lapidus A."/>
            <person name="Barry K."/>
            <person name="Glavina del Rio T."/>
            <person name="Dalin E."/>
            <person name="Tice H."/>
            <person name="Pitluck S."/>
            <person name="Lowry S."/>
            <person name="Clum A."/>
            <person name="Schmutz J."/>
            <person name="Larimer F."/>
            <person name="Land M."/>
            <person name="Hauser L."/>
            <person name="Kyrpides N."/>
            <person name="Kim E."/>
            <person name="Schleheck D."/>
            <person name="Richardson P."/>
        </authorList>
    </citation>
    <scope>NUCLEOTIDE SEQUENCE [LARGE SCALE GENOMIC DNA]</scope>
    <source>
        <strain>DSM 14801 / SPH-1</strain>
    </source>
</reference>